<comment type="function">
    <text evidence="1">Pyrophosphatase that catalyzes the hydrolysis of nucleoside triphosphates to their monophosphate derivatives, with a high preference for the non-canonical purine nucleotides XTP (xanthosine triphosphate), dITP (deoxyinosine triphosphate) and ITP. Seems to function as a house-cleaning enzyme that removes non-canonical purine nucleotides from the nucleotide pool, thus preventing their incorporation into DNA/RNA and avoiding chromosomal lesions.</text>
</comment>
<comment type="catalytic activity">
    <reaction evidence="1">
        <text>XTP + H2O = XMP + diphosphate + H(+)</text>
        <dbReference type="Rhea" id="RHEA:28610"/>
        <dbReference type="ChEBI" id="CHEBI:15377"/>
        <dbReference type="ChEBI" id="CHEBI:15378"/>
        <dbReference type="ChEBI" id="CHEBI:33019"/>
        <dbReference type="ChEBI" id="CHEBI:57464"/>
        <dbReference type="ChEBI" id="CHEBI:61314"/>
        <dbReference type="EC" id="3.6.1.66"/>
    </reaction>
</comment>
<comment type="catalytic activity">
    <reaction evidence="1">
        <text>dITP + H2O = dIMP + diphosphate + H(+)</text>
        <dbReference type="Rhea" id="RHEA:28342"/>
        <dbReference type="ChEBI" id="CHEBI:15377"/>
        <dbReference type="ChEBI" id="CHEBI:15378"/>
        <dbReference type="ChEBI" id="CHEBI:33019"/>
        <dbReference type="ChEBI" id="CHEBI:61194"/>
        <dbReference type="ChEBI" id="CHEBI:61382"/>
        <dbReference type="EC" id="3.6.1.66"/>
    </reaction>
</comment>
<comment type="catalytic activity">
    <reaction evidence="1">
        <text>ITP + H2O = IMP + diphosphate + H(+)</text>
        <dbReference type="Rhea" id="RHEA:29399"/>
        <dbReference type="ChEBI" id="CHEBI:15377"/>
        <dbReference type="ChEBI" id="CHEBI:15378"/>
        <dbReference type="ChEBI" id="CHEBI:33019"/>
        <dbReference type="ChEBI" id="CHEBI:58053"/>
        <dbReference type="ChEBI" id="CHEBI:61402"/>
        <dbReference type="EC" id="3.6.1.66"/>
    </reaction>
</comment>
<comment type="cofactor">
    <cofactor evidence="1">
        <name>Mg(2+)</name>
        <dbReference type="ChEBI" id="CHEBI:18420"/>
    </cofactor>
    <text evidence="1">Binds 1 Mg(2+) ion per subunit.</text>
</comment>
<comment type="subunit">
    <text evidence="1">Homodimer.</text>
</comment>
<comment type="similarity">
    <text evidence="1">Belongs to the HAM1 NTPase family.</text>
</comment>
<reference key="1">
    <citation type="journal article" date="1998" name="Nature">
        <title>The complete genome of the hyperthermophilic bacterium Aquifex aeolicus.</title>
        <authorList>
            <person name="Deckert G."/>
            <person name="Warren P.V."/>
            <person name="Gaasterland T."/>
            <person name="Young W.G."/>
            <person name="Lenox A.L."/>
            <person name="Graham D.E."/>
            <person name="Overbeek R."/>
            <person name="Snead M.A."/>
            <person name="Keller M."/>
            <person name="Aujay M."/>
            <person name="Huber R."/>
            <person name="Feldman R.A."/>
            <person name="Short J.M."/>
            <person name="Olsen G.J."/>
            <person name="Swanson R.V."/>
        </authorList>
    </citation>
    <scope>NUCLEOTIDE SEQUENCE [LARGE SCALE GENOMIC DNA]</scope>
    <source>
        <strain>VF5</strain>
    </source>
</reference>
<name>IXTPA_AQUAE</name>
<organism>
    <name type="scientific">Aquifex aeolicus (strain VF5)</name>
    <dbReference type="NCBI Taxonomy" id="224324"/>
    <lineage>
        <taxon>Bacteria</taxon>
        <taxon>Pseudomonadati</taxon>
        <taxon>Aquificota</taxon>
        <taxon>Aquificia</taxon>
        <taxon>Aquificales</taxon>
        <taxon>Aquificaceae</taxon>
        <taxon>Aquifex</taxon>
    </lineage>
</organism>
<sequence length="202" mass="23115">MKLLVATTNEGKYREIKEILSEYGIEVLKPEEKLEVEETGCTFLENAYLKARAYYERYKIPALADDSGLIVEAISPYPGVYSSRFYDIDFGGREEVRTNKDEANIRKLLRLLENTENRKAKFVAFIVVYGGSWGIFAEGEVRGEITKEPRGDRGFGYDPVFVPEGYNKTMAELSPEEKNKISHRGRALRKLVHVLKNCEKAF</sequence>
<gene>
    <name type="ordered locus">aq_202</name>
</gene>
<feature type="chain" id="PRO_0000178117" description="dITP/XTP pyrophosphatase">
    <location>
        <begin position="1"/>
        <end position="202"/>
    </location>
</feature>
<feature type="active site" description="Proton acceptor" evidence="1">
    <location>
        <position position="66"/>
    </location>
</feature>
<feature type="binding site" evidence="1">
    <location>
        <begin position="7"/>
        <end position="12"/>
    </location>
    <ligand>
        <name>substrate</name>
    </ligand>
</feature>
<feature type="binding site" evidence="1">
    <location>
        <position position="37"/>
    </location>
    <ligand>
        <name>Mg(2+)</name>
        <dbReference type="ChEBI" id="CHEBI:18420"/>
    </ligand>
</feature>
<feature type="binding site" evidence="1">
    <location>
        <position position="66"/>
    </location>
    <ligand>
        <name>Mg(2+)</name>
        <dbReference type="ChEBI" id="CHEBI:18420"/>
    </ligand>
</feature>
<feature type="binding site" evidence="1">
    <location>
        <position position="67"/>
    </location>
    <ligand>
        <name>substrate</name>
    </ligand>
</feature>
<feature type="binding site" evidence="1">
    <location>
        <begin position="155"/>
        <end position="158"/>
    </location>
    <ligand>
        <name>substrate</name>
    </ligand>
</feature>
<feature type="binding site" evidence="1">
    <location>
        <position position="178"/>
    </location>
    <ligand>
        <name>substrate</name>
    </ligand>
</feature>
<feature type="binding site" evidence="1">
    <location>
        <begin position="183"/>
        <end position="184"/>
    </location>
    <ligand>
        <name>substrate</name>
    </ligand>
</feature>
<accession>O66580</accession>
<protein>
    <recommendedName>
        <fullName evidence="1">dITP/XTP pyrophosphatase</fullName>
        <ecNumber evidence="1">3.6.1.66</ecNumber>
    </recommendedName>
    <alternativeName>
        <fullName evidence="1">Non-canonical purine NTP pyrophosphatase</fullName>
    </alternativeName>
    <alternativeName>
        <fullName evidence="1">Non-standard purine NTP pyrophosphatase</fullName>
    </alternativeName>
    <alternativeName>
        <fullName evidence="1">Nucleoside-triphosphate diphosphatase</fullName>
    </alternativeName>
    <alternativeName>
        <fullName evidence="1">Nucleoside-triphosphate pyrophosphatase</fullName>
        <shortName evidence="1">NTPase</shortName>
    </alternativeName>
</protein>
<dbReference type="EC" id="3.6.1.66" evidence="1"/>
<dbReference type="EMBL" id="AE000657">
    <property type="protein sequence ID" value="AAC06551.1"/>
    <property type="molecule type" value="Genomic_DNA"/>
</dbReference>
<dbReference type="PIR" id="H70318">
    <property type="entry name" value="H70318"/>
</dbReference>
<dbReference type="RefSeq" id="NP_213140.1">
    <property type="nucleotide sequence ID" value="NC_000918.1"/>
</dbReference>
<dbReference type="RefSeq" id="WP_010880078.1">
    <property type="nucleotide sequence ID" value="NC_000918.1"/>
</dbReference>
<dbReference type="SMR" id="O66580"/>
<dbReference type="FunCoup" id="O66580">
    <property type="interactions" value="433"/>
</dbReference>
<dbReference type="STRING" id="224324.aq_202"/>
<dbReference type="EnsemblBacteria" id="AAC06551">
    <property type="protein sequence ID" value="AAC06551"/>
    <property type="gene ID" value="aq_202"/>
</dbReference>
<dbReference type="KEGG" id="aae:aq_202"/>
<dbReference type="PATRIC" id="fig|224324.8.peg.171"/>
<dbReference type="eggNOG" id="COG0127">
    <property type="taxonomic scope" value="Bacteria"/>
</dbReference>
<dbReference type="HOGENOM" id="CLU_082080_0_2_0"/>
<dbReference type="InParanoid" id="O66580"/>
<dbReference type="OrthoDB" id="9807456at2"/>
<dbReference type="Proteomes" id="UP000000798">
    <property type="component" value="Chromosome"/>
</dbReference>
<dbReference type="GO" id="GO:0005737">
    <property type="term" value="C:cytoplasm"/>
    <property type="evidence" value="ECO:0000318"/>
    <property type="project" value="GO_Central"/>
</dbReference>
<dbReference type="GO" id="GO:0005829">
    <property type="term" value="C:cytosol"/>
    <property type="evidence" value="ECO:0000318"/>
    <property type="project" value="GO_Central"/>
</dbReference>
<dbReference type="GO" id="GO:0035870">
    <property type="term" value="F:dITP diphosphatase activity"/>
    <property type="evidence" value="ECO:0007669"/>
    <property type="project" value="RHEA"/>
</dbReference>
<dbReference type="GO" id="GO:0036220">
    <property type="term" value="F:ITP diphosphatase activity"/>
    <property type="evidence" value="ECO:0007669"/>
    <property type="project" value="UniProtKB-EC"/>
</dbReference>
<dbReference type="GO" id="GO:0046872">
    <property type="term" value="F:metal ion binding"/>
    <property type="evidence" value="ECO:0007669"/>
    <property type="project" value="UniProtKB-KW"/>
</dbReference>
<dbReference type="GO" id="GO:0047429">
    <property type="term" value="F:nucleoside triphosphate diphosphatase activity"/>
    <property type="evidence" value="ECO:0000318"/>
    <property type="project" value="GO_Central"/>
</dbReference>
<dbReference type="GO" id="GO:0000166">
    <property type="term" value="F:nucleotide binding"/>
    <property type="evidence" value="ECO:0007669"/>
    <property type="project" value="UniProtKB-KW"/>
</dbReference>
<dbReference type="GO" id="GO:0017111">
    <property type="term" value="F:ribonucleoside triphosphate phosphatase activity"/>
    <property type="evidence" value="ECO:0007669"/>
    <property type="project" value="InterPro"/>
</dbReference>
<dbReference type="GO" id="GO:0036222">
    <property type="term" value="F:XTP diphosphatase activity"/>
    <property type="evidence" value="ECO:0007669"/>
    <property type="project" value="RHEA"/>
</dbReference>
<dbReference type="GO" id="GO:0009143">
    <property type="term" value="P:nucleoside triphosphate catabolic process"/>
    <property type="evidence" value="ECO:0000318"/>
    <property type="project" value="GO_Central"/>
</dbReference>
<dbReference type="GO" id="GO:0009117">
    <property type="term" value="P:nucleotide metabolic process"/>
    <property type="evidence" value="ECO:0007669"/>
    <property type="project" value="UniProtKB-KW"/>
</dbReference>
<dbReference type="GO" id="GO:0009146">
    <property type="term" value="P:purine nucleoside triphosphate catabolic process"/>
    <property type="evidence" value="ECO:0007669"/>
    <property type="project" value="UniProtKB-UniRule"/>
</dbReference>
<dbReference type="CDD" id="cd00515">
    <property type="entry name" value="HAM1"/>
    <property type="match status" value="1"/>
</dbReference>
<dbReference type="FunFam" id="3.90.950.10:FF:000001">
    <property type="entry name" value="dITP/XTP pyrophosphatase"/>
    <property type="match status" value="1"/>
</dbReference>
<dbReference type="Gene3D" id="3.90.950.10">
    <property type="match status" value="1"/>
</dbReference>
<dbReference type="HAMAP" id="MF_01405">
    <property type="entry name" value="Non_canon_purine_NTPase"/>
    <property type="match status" value="1"/>
</dbReference>
<dbReference type="InterPro" id="IPR020922">
    <property type="entry name" value="dITP/XTP_pyrophosphatase"/>
</dbReference>
<dbReference type="InterPro" id="IPR029001">
    <property type="entry name" value="ITPase-like_fam"/>
</dbReference>
<dbReference type="InterPro" id="IPR002637">
    <property type="entry name" value="RdgB/HAM1"/>
</dbReference>
<dbReference type="NCBIfam" id="NF011399">
    <property type="entry name" value="PRK14824.1"/>
    <property type="match status" value="1"/>
</dbReference>
<dbReference type="NCBIfam" id="TIGR00042">
    <property type="entry name" value="RdgB/HAM1 family non-canonical purine NTP pyrophosphatase"/>
    <property type="match status" value="1"/>
</dbReference>
<dbReference type="PANTHER" id="PTHR11067:SF9">
    <property type="entry name" value="INOSINE TRIPHOSPHATE PYROPHOSPHATASE"/>
    <property type="match status" value="1"/>
</dbReference>
<dbReference type="PANTHER" id="PTHR11067">
    <property type="entry name" value="INOSINE TRIPHOSPHATE PYROPHOSPHATASE/HAM1 PROTEIN"/>
    <property type="match status" value="1"/>
</dbReference>
<dbReference type="Pfam" id="PF01725">
    <property type="entry name" value="Ham1p_like"/>
    <property type="match status" value="1"/>
</dbReference>
<dbReference type="SUPFAM" id="SSF52972">
    <property type="entry name" value="ITPase-like"/>
    <property type="match status" value="1"/>
</dbReference>
<keyword id="KW-0378">Hydrolase</keyword>
<keyword id="KW-0460">Magnesium</keyword>
<keyword id="KW-0479">Metal-binding</keyword>
<keyword id="KW-0546">Nucleotide metabolism</keyword>
<keyword id="KW-0547">Nucleotide-binding</keyword>
<keyword id="KW-1185">Reference proteome</keyword>
<evidence type="ECO:0000255" key="1">
    <source>
        <dbReference type="HAMAP-Rule" id="MF_01405"/>
    </source>
</evidence>
<proteinExistence type="inferred from homology"/>